<proteinExistence type="inferred from homology"/>
<name>ARLY_RHIJ3</name>
<sequence length="467" mass="51097">MADDTTDTKSSNQMWGGRFASGPDAIMEEINASIGFDKKLFAQDIRGSIAHATMLAHQEIISAEDKDKIVHGLNTILSEIESGNFEFSRQLEDIHMNVEARLATLIGPAAGRLHTARSRNDQVALDFRLWVKEELQKTEQMLTGLIAAFLDRAEEHAESVMPGFTHLQTAQPVTFGHHCMAYVEMFGRDRSRVRHAIEHLDESPIGAAALAGTGYPIDRHMTAKALGFREPTRNSIDTVSDRDFAIEFLSIAAIAGMHLSRLAEEIVIWSTPQFGFVRLSDAFSTGSSIMPQKKNPDAAELVRAKTGRINGSLVALLTIMKGLPLAYSKDMQEDKEQVFDAAESLELAIAAMTGMVRDMTVNTARMKAAAGSGYSTATDLADWLVREAGLPFRDAHHVTGRAVALAESKGCDLAELPLSDLQAIHADITDKVYDVLTVEASVASRKSFGGTAPSEVRRQIAFWRARN</sequence>
<feature type="chain" id="PRO_0000321448" description="Argininosuccinate lyase">
    <location>
        <begin position="1"/>
        <end position="467"/>
    </location>
</feature>
<evidence type="ECO:0000255" key="1">
    <source>
        <dbReference type="HAMAP-Rule" id="MF_00006"/>
    </source>
</evidence>
<evidence type="ECO:0000305" key="2"/>
<keyword id="KW-0028">Amino-acid biosynthesis</keyword>
<keyword id="KW-0055">Arginine biosynthesis</keyword>
<keyword id="KW-0963">Cytoplasm</keyword>
<keyword id="KW-0456">Lyase</keyword>
<comment type="catalytic activity">
    <reaction evidence="1">
        <text>2-(N(omega)-L-arginino)succinate = fumarate + L-arginine</text>
        <dbReference type="Rhea" id="RHEA:24020"/>
        <dbReference type="ChEBI" id="CHEBI:29806"/>
        <dbReference type="ChEBI" id="CHEBI:32682"/>
        <dbReference type="ChEBI" id="CHEBI:57472"/>
        <dbReference type="EC" id="4.3.2.1"/>
    </reaction>
</comment>
<comment type="pathway">
    <text evidence="1">Amino-acid biosynthesis; L-arginine biosynthesis; L-arginine from L-ornithine and carbamoyl phosphate: step 3/3.</text>
</comment>
<comment type="subcellular location">
    <subcellularLocation>
        <location evidence="1">Cytoplasm</location>
    </subcellularLocation>
</comment>
<comment type="similarity">
    <text evidence="1">Belongs to the lyase 1 family. Argininosuccinate lyase subfamily.</text>
</comment>
<comment type="sequence caution" evidence="2">
    <conflict type="erroneous initiation">
        <sequence resource="EMBL-CDS" id="CAK09811"/>
    </conflict>
</comment>
<reference key="1">
    <citation type="journal article" date="2006" name="Genome Biol.">
        <title>The genome of Rhizobium leguminosarum has recognizable core and accessory components.</title>
        <authorList>
            <person name="Young J.P.W."/>
            <person name="Crossman L.C."/>
            <person name="Johnston A.W.B."/>
            <person name="Thomson N.R."/>
            <person name="Ghazoui Z.F."/>
            <person name="Hull K.H."/>
            <person name="Wexler M."/>
            <person name="Curson A.R.J."/>
            <person name="Todd J.D."/>
            <person name="Poole P.S."/>
            <person name="Mauchline T.H."/>
            <person name="East A.K."/>
            <person name="Quail M.A."/>
            <person name="Churcher C."/>
            <person name="Arrowsmith C."/>
            <person name="Cherevach I."/>
            <person name="Chillingworth T."/>
            <person name="Clarke K."/>
            <person name="Cronin A."/>
            <person name="Davis P."/>
            <person name="Fraser A."/>
            <person name="Hance Z."/>
            <person name="Hauser H."/>
            <person name="Jagels K."/>
            <person name="Moule S."/>
            <person name="Mungall K."/>
            <person name="Norbertczak H."/>
            <person name="Rabbinowitsch E."/>
            <person name="Sanders M."/>
            <person name="Simmonds M."/>
            <person name="Whitehead S."/>
            <person name="Parkhill J."/>
        </authorList>
    </citation>
    <scope>NUCLEOTIDE SEQUENCE [LARGE SCALE GENOMIC DNA]</scope>
    <source>
        <strain>DSM 114642 / LMG 32736 / 3841</strain>
    </source>
</reference>
<protein>
    <recommendedName>
        <fullName evidence="1">Argininosuccinate lyase</fullName>
        <shortName evidence="1">ASAL</shortName>
        <ecNumber evidence="1">4.3.2.1</ecNumber>
    </recommendedName>
    <alternativeName>
        <fullName evidence="1">Arginosuccinase</fullName>
    </alternativeName>
</protein>
<accession>Q1MB73</accession>
<organism>
    <name type="scientific">Rhizobium johnstonii (strain DSM 114642 / LMG 32736 / 3841)</name>
    <name type="common">Rhizobium leguminosarum bv. viciae</name>
    <dbReference type="NCBI Taxonomy" id="216596"/>
    <lineage>
        <taxon>Bacteria</taxon>
        <taxon>Pseudomonadati</taxon>
        <taxon>Pseudomonadota</taxon>
        <taxon>Alphaproteobacteria</taxon>
        <taxon>Hyphomicrobiales</taxon>
        <taxon>Rhizobiaceae</taxon>
        <taxon>Rhizobium/Agrobacterium group</taxon>
        <taxon>Rhizobium</taxon>
        <taxon>Rhizobium johnstonii</taxon>
    </lineage>
</organism>
<dbReference type="EC" id="4.3.2.1" evidence="1"/>
<dbReference type="EMBL" id="AM236080">
    <property type="protein sequence ID" value="CAK09811.1"/>
    <property type="status" value="ALT_INIT"/>
    <property type="molecule type" value="Genomic_DNA"/>
</dbReference>
<dbReference type="RefSeq" id="WP_041936482.1">
    <property type="nucleotide sequence ID" value="NC_008380.1"/>
</dbReference>
<dbReference type="SMR" id="Q1MB73"/>
<dbReference type="EnsemblBacteria" id="CAK09811">
    <property type="protein sequence ID" value="CAK09811"/>
    <property type="gene ID" value="RL4323"/>
</dbReference>
<dbReference type="KEGG" id="rle:RL4323"/>
<dbReference type="eggNOG" id="COG0165">
    <property type="taxonomic scope" value="Bacteria"/>
</dbReference>
<dbReference type="HOGENOM" id="CLU_027272_2_3_5"/>
<dbReference type="UniPathway" id="UPA00068">
    <property type="reaction ID" value="UER00114"/>
</dbReference>
<dbReference type="Proteomes" id="UP000006575">
    <property type="component" value="Chromosome"/>
</dbReference>
<dbReference type="GO" id="GO:0005829">
    <property type="term" value="C:cytosol"/>
    <property type="evidence" value="ECO:0007669"/>
    <property type="project" value="TreeGrafter"/>
</dbReference>
<dbReference type="GO" id="GO:0004056">
    <property type="term" value="F:argininosuccinate lyase activity"/>
    <property type="evidence" value="ECO:0007669"/>
    <property type="project" value="UniProtKB-UniRule"/>
</dbReference>
<dbReference type="GO" id="GO:0042450">
    <property type="term" value="P:arginine biosynthetic process via ornithine"/>
    <property type="evidence" value="ECO:0007669"/>
    <property type="project" value="InterPro"/>
</dbReference>
<dbReference type="GO" id="GO:0006526">
    <property type="term" value="P:L-arginine biosynthetic process"/>
    <property type="evidence" value="ECO:0007669"/>
    <property type="project" value="UniProtKB-UniRule"/>
</dbReference>
<dbReference type="CDD" id="cd01359">
    <property type="entry name" value="Argininosuccinate_lyase"/>
    <property type="match status" value="1"/>
</dbReference>
<dbReference type="FunFam" id="1.10.275.10:FF:000002">
    <property type="entry name" value="Argininosuccinate lyase"/>
    <property type="match status" value="1"/>
</dbReference>
<dbReference type="FunFam" id="1.10.40.30:FF:000001">
    <property type="entry name" value="Argininosuccinate lyase"/>
    <property type="match status" value="1"/>
</dbReference>
<dbReference type="FunFam" id="1.20.200.10:FF:000015">
    <property type="entry name" value="argininosuccinate lyase isoform X2"/>
    <property type="match status" value="1"/>
</dbReference>
<dbReference type="Gene3D" id="1.10.40.30">
    <property type="entry name" value="Fumarase/aspartase (C-terminal domain)"/>
    <property type="match status" value="1"/>
</dbReference>
<dbReference type="Gene3D" id="1.20.200.10">
    <property type="entry name" value="Fumarase/aspartase (Central domain)"/>
    <property type="match status" value="1"/>
</dbReference>
<dbReference type="Gene3D" id="1.10.275.10">
    <property type="entry name" value="Fumarase/aspartase (N-terminal domain)"/>
    <property type="match status" value="1"/>
</dbReference>
<dbReference type="HAMAP" id="MF_00006">
    <property type="entry name" value="Arg_succ_lyase"/>
    <property type="match status" value="1"/>
</dbReference>
<dbReference type="InterPro" id="IPR029419">
    <property type="entry name" value="Arg_succ_lyase_C"/>
</dbReference>
<dbReference type="InterPro" id="IPR009049">
    <property type="entry name" value="Argininosuccinate_lyase"/>
</dbReference>
<dbReference type="InterPro" id="IPR024083">
    <property type="entry name" value="Fumarase/histidase_N"/>
</dbReference>
<dbReference type="InterPro" id="IPR020557">
    <property type="entry name" value="Fumarate_lyase_CS"/>
</dbReference>
<dbReference type="InterPro" id="IPR000362">
    <property type="entry name" value="Fumarate_lyase_fam"/>
</dbReference>
<dbReference type="InterPro" id="IPR022761">
    <property type="entry name" value="Fumarate_lyase_N"/>
</dbReference>
<dbReference type="InterPro" id="IPR008948">
    <property type="entry name" value="L-Aspartase-like"/>
</dbReference>
<dbReference type="NCBIfam" id="TIGR00838">
    <property type="entry name" value="argH"/>
    <property type="match status" value="1"/>
</dbReference>
<dbReference type="PANTHER" id="PTHR43814">
    <property type="entry name" value="ARGININOSUCCINATE LYASE"/>
    <property type="match status" value="1"/>
</dbReference>
<dbReference type="PANTHER" id="PTHR43814:SF1">
    <property type="entry name" value="ARGININOSUCCINATE LYASE"/>
    <property type="match status" value="1"/>
</dbReference>
<dbReference type="Pfam" id="PF14698">
    <property type="entry name" value="ASL_C2"/>
    <property type="match status" value="1"/>
</dbReference>
<dbReference type="Pfam" id="PF00206">
    <property type="entry name" value="Lyase_1"/>
    <property type="match status" value="1"/>
</dbReference>
<dbReference type="PRINTS" id="PR00145">
    <property type="entry name" value="ARGSUCLYASE"/>
</dbReference>
<dbReference type="PRINTS" id="PR00149">
    <property type="entry name" value="FUMRATELYASE"/>
</dbReference>
<dbReference type="SUPFAM" id="SSF48557">
    <property type="entry name" value="L-aspartase-like"/>
    <property type="match status" value="1"/>
</dbReference>
<dbReference type="PROSITE" id="PS00163">
    <property type="entry name" value="FUMARATE_LYASES"/>
    <property type="match status" value="1"/>
</dbReference>
<gene>
    <name evidence="1" type="primary">argH</name>
    <name type="ordered locus">RL4323</name>
</gene>